<comment type="function">
    <text evidence="2">tRNA hydroxylase that acts as a component of the wybutosine biosynthesis pathway. Wybutosine is a hyper modified guanosine with a tricyclic base found at the 3'-position adjacent to the anticodon of eukaryotic phenylalanine tRNA. Catalyzes the hydroxylation of 7-(a-amino-a-carboxypropyl)wyosine (yW-72) into undermodified hydroxywybutosine (OHyW*). OHyW* being further transformed into hydroxywybutosine (OHyW) by LCMT2/TYW4. OHyW is a derivative of wybutosine found in higher eukaryotes.</text>
</comment>
<comment type="catalytic activity">
    <reaction evidence="2">
        <text>7-[(3S)-3-amino-3-carboxypropyl]wyosine(37) in tRNA(Phe) + 2-oxoglutarate + O2 = 7-(2-hydroxy-3-amino-3-carboxypropyl)wyosine(37) in tRNA(Phe) + succinate + CO2</text>
        <dbReference type="Rhea" id="RHEA:37899"/>
        <dbReference type="Rhea" id="RHEA-COMP:10379"/>
        <dbReference type="Rhea" id="RHEA-COMP:11848"/>
        <dbReference type="ChEBI" id="CHEBI:15379"/>
        <dbReference type="ChEBI" id="CHEBI:16526"/>
        <dbReference type="ChEBI" id="CHEBI:16810"/>
        <dbReference type="ChEBI" id="CHEBI:30031"/>
        <dbReference type="ChEBI" id="CHEBI:73543"/>
        <dbReference type="ChEBI" id="CHEBI:73603"/>
        <dbReference type="EC" id="1.14.11.42"/>
    </reaction>
    <physiologicalReaction direction="left-to-right" evidence="2">
        <dbReference type="Rhea" id="RHEA:37900"/>
    </physiologicalReaction>
</comment>
<comment type="cofactor">
    <cofactor evidence="2">
        <name>Fe(2+)</name>
        <dbReference type="ChEBI" id="CHEBI:29033"/>
    </cofactor>
    <text evidence="2">Binds 1 Fe(2+) ion per subunit.</text>
</comment>
<comment type="pathway">
    <text evidence="2">tRNA modification; wybutosine-tRNA(Phe) biosynthesis.</text>
</comment>
<comment type="subunit">
    <text evidence="2">Homodimer.</text>
</comment>
<comment type="similarity">
    <text evidence="4">Belongs to the TYW5 family.</text>
</comment>
<organism>
    <name type="scientific">Danio rerio</name>
    <name type="common">Zebrafish</name>
    <name type="synonym">Brachydanio rerio</name>
    <dbReference type="NCBI Taxonomy" id="7955"/>
    <lineage>
        <taxon>Eukaryota</taxon>
        <taxon>Metazoa</taxon>
        <taxon>Chordata</taxon>
        <taxon>Craniata</taxon>
        <taxon>Vertebrata</taxon>
        <taxon>Euteleostomi</taxon>
        <taxon>Actinopterygii</taxon>
        <taxon>Neopterygii</taxon>
        <taxon>Teleostei</taxon>
        <taxon>Ostariophysi</taxon>
        <taxon>Cypriniformes</taxon>
        <taxon>Danionidae</taxon>
        <taxon>Danioninae</taxon>
        <taxon>Danio</taxon>
    </lineage>
</organism>
<protein>
    <recommendedName>
        <fullName evidence="4">tRNA wybutosine-synthesizing protein 5</fullName>
        <ecNumber evidence="2">1.14.11.42</ecNumber>
    </recommendedName>
    <alternativeName>
        <fullName>tRNA(Phe) (7-(3-amino-3-carboxypropyl)wyosine(37)-C(2))-hydroxylase</fullName>
    </alternativeName>
</protein>
<proteinExistence type="evidence at transcript level"/>
<dbReference type="EC" id="1.14.11.42" evidence="2"/>
<dbReference type="EMBL" id="BC124543">
    <property type="protein sequence ID" value="AAI24544.1"/>
    <property type="molecule type" value="mRNA"/>
</dbReference>
<dbReference type="RefSeq" id="NP_001071011.1">
    <property type="nucleotide sequence ID" value="NM_001077543.1"/>
</dbReference>
<dbReference type="SMR" id="Q08BV2"/>
<dbReference type="FunCoup" id="Q08BV2">
    <property type="interactions" value="368"/>
</dbReference>
<dbReference type="STRING" id="7955.ENSDARP00000092344"/>
<dbReference type="PaxDb" id="7955-ENSDARP00000092344"/>
<dbReference type="GeneID" id="557725"/>
<dbReference type="KEGG" id="dre:557725"/>
<dbReference type="AGR" id="ZFIN:ZDB-GENE-060929-894"/>
<dbReference type="CTD" id="129450"/>
<dbReference type="ZFIN" id="ZDB-GENE-060929-894">
    <property type="gene designation" value="tyw5"/>
</dbReference>
<dbReference type="eggNOG" id="KOG2132">
    <property type="taxonomic scope" value="Eukaryota"/>
</dbReference>
<dbReference type="InParanoid" id="Q08BV2"/>
<dbReference type="OrthoDB" id="263283at2759"/>
<dbReference type="PhylomeDB" id="Q08BV2"/>
<dbReference type="UniPathway" id="UPA00375"/>
<dbReference type="PRO" id="PR:Q08BV2"/>
<dbReference type="Proteomes" id="UP000000437">
    <property type="component" value="Alternate scaffold 9"/>
</dbReference>
<dbReference type="Proteomes" id="UP000000437">
    <property type="component" value="Chromosome 9"/>
</dbReference>
<dbReference type="GO" id="GO:0005506">
    <property type="term" value="F:iron ion binding"/>
    <property type="evidence" value="ECO:0000250"/>
    <property type="project" value="UniProtKB"/>
</dbReference>
<dbReference type="GO" id="GO:0042803">
    <property type="term" value="F:protein homodimerization activity"/>
    <property type="evidence" value="ECO:0000250"/>
    <property type="project" value="UniProtKB"/>
</dbReference>
<dbReference type="GO" id="GO:0000049">
    <property type="term" value="F:tRNA binding"/>
    <property type="evidence" value="ECO:0000250"/>
    <property type="project" value="UniProtKB"/>
</dbReference>
<dbReference type="GO" id="GO:0102524">
    <property type="term" value="F:tRNA(Phe) (7-(3-amino-3-carboxypropyl)wyosine37-C2)-hydroxylase activity"/>
    <property type="evidence" value="ECO:0000250"/>
    <property type="project" value="UniProtKB"/>
</dbReference>
<dbReference type="GO" id="GO:0031591">
    <property type="term" value="P:wybutosine biosynthetic process"/>
    <property type="evidence" value="ECO:0000250"/>
    <property type="project" value="UniProtKB"/>
</dbReference>
<dbReference type="FunFam" id="2.60.120.650:FF:000022">
    <property type="entry name" value="tRNA wybutosine-synthesizing protein 5"/>
    <property type="match status" value="1"/>
</dbReference>
<dbReference type="Gene3D" id="6.10.140.1470">
    <property type="match status" value="1"/>
</dbReference>
<dbReference type="Gene3D" id="2.60.120.650">
    <property type="entry name" value="Cupin"/>
    <property type="match status" value="1"/>
</dbReference>
<dbReference type="InterPro" id="IPR041667">
    <property type="entry name" value="Cupin_8"/>
</dbReference>
<dbReference type="InterPro" id="IPR003347">
    <property type="entry name" value="JmjC_dom"/>
</dbReference>
<dbReference type="PANTHER" id="PTHR12461">
    <property type="entry name" value="HYPOXIA-INDUCIBLE FACTOR 1 ALPHA INHIBITOR-RELATED"/>
    <property type="match status" value="1"/>
</dbReference>
<dbReference type="PANTHER" id="PTHR12461:SF104">
    <property type="entry name" value="TRNA WYBUTOSINE-SYNTHESIZING PROTEIN 5"/>
    <property type="match status" value="1"/>
</dbReference>
<dbReference type="Pfam" id="PF13621">
    <property type="entry name" value="Cupin_8"/>
    <property type="match status" value="1"/>
</dbReference>
<dbReference type="SMART" id="SM00558">
    <property type="entry name" value="JmjC"/>
    <property type="match status" value="1"/>
</dbReference>
<dbReference type="SUPFAM" id="SSF51197">
    <property type="entry name" value="Clavaminate synthase-like"/>
    <property type="match status" value="1"/>
</dbReference>
<dbReference type="PROSITE" id="PS51184">
    <property type="entry name" value="JMJC"/>
    <property type="match status" value="1"/>
</dbReference>
<accession>Q08BV2</accession>
<sequence>MDCQEKLEVPVYTDVDKETFLRDIYPQRRPAVLKRVPIGPCVRTWTVCFLAEKGGDREVKVHVSPEPRMDFLHKNFVYRTLPFDEFIKRAAEAKHPEFFISEDESYYLRSLGEDARKEPADLRKQFPELAEDFHVPQFFEPEQFFSSVFRISSPGLQLWTHYDVMDNLLAQVTGKKRVVLYSPEDALHLYLTGDKSEVLDIDSPDLQLYPEFVKARRYECILEPGDLLFIPALWFHNTLALQFGVGVNVFWRHLPSESYDKKDPYGNKDPVAATRALQSLERTLGILDELPPDYRDFYARRMVLRIQSRAYIRKPINAAQENSDTT</sequence>
<name>TYW5_DANRE</name>
<gene>
    <name type="primary">tyw5</name>
    <name type="ORF">zgc:154110</name>
</gene>
<feature type="chain" id="PRO_0000309276" description="tRNA wybutosine-synthesizing protein 5">
    <location>
        <begin position="1"/>
        <end position="326"/>
    </location>
</feature>
<feature type="domain" description="JmjC" evidence="3">
    <location>
        <begin position="106"/>
        <end position="268"/>
    </location>
</feature>
<feature type="binding site" evidence="1">
    <location>
        <position position="107"/>
    </location>
    <ligand>
        <name>2-oxoglutarate</name>
        <dbReference type="ChEBI" id="CHEBI:16810"/>
    </ligand>
</feature>
<feature type="binding site" evidence="3">
    <location>
        <position position="161"/>
    </location>
    <ligand>
        <name>Fe cation</name>
        <dbReference type="ChEBI" id="CHEBI:24875"/>
        <note>catalytic</note>
    </ligand>
</feature>
<feature type="binding site" evidence="3">
    <location>
        <position position="163"/>
    </location>
    <ligand>
        <name>Fe cation</name>
        <dbReference type="ChEBI" id="CHEBI:24875"/>
        <note>catalytic</note>
    </ligand>
</feature>
<feature type="binding site" evidence="1">
    <location>
        <position position="167"/>
    </location>
    <ligand>
        <name>2-oxoglutarate</name>
        <dbReference type="ChEBI" id="CHEBI:16810"/>
    </ligand>
</feature>
<feature type="binding site" evidence="1">
    <location>
        <position position="176"/>
    </location>
    <ligand>
        <name>2-oxoglutarate</name>
        <dbReference type="ChEBI" id="CHEBI:16810"/>
    </ligand>
</feature>
<feature type="binding site" evidence="3">
    <location>
        <position position="236"/>
    </location>
    <ligand>
        <name>Fe cation</name>
        <dbReference type="ChEBI" id="CHEBI:24875"/>
        <note>catalytic</note>
    </ligand>
</feature>
<reference key="1">
    <citation type="submission" date="2006-09" db="EMBL/GenBank/DDBJ databases">
        <authorList>
            <consortium name="NIH - Zebrafish Gene Collection (ZGC) project"/>
        </authorList>
    </citation>
    <scope>NUCLEOTIDE SEQUENCE [LARGE SCALE MRNA]</scope>
</reference>
<evidence type="ECO:0000250" key="1"/>
<evidence type="ECO:0000250" key="2">
    <source>
        <dbReference type="UniProtKB" id="A2RUC4"/>
    </source>
</evidence>
<evidence type="ECO:0000255" key="3">
    <source>
        <dbReference type="PROSITE-ProRule" id="PRU00538"/>
    </source>
</evidence>
<evidence type="ECO:0000305" key="4"/>
<keyword id="KW-0223">Dioxygenase</keyword>
<keyword id="KW-0408">Iron</keyword>
<keyword id="KW-0479">Metal-binding</keyword>
<keyword id="KW-0560">Oxidoreductase</keyword>
<keyword id="KW-1185">Reference proteome</keyword>
<keyword id="KW-0819">tRNA processing</keyword>